<protein>
    <recommendedName>
        <fullName>Escargot/snail protein homolog</fullName>
    </recommendedName>
</protein>
<proteinExistence type="inferred from homology"/>
<comment type="subcellular location">
    <subcellularLocation>
        <location evidence="2">Nucleus</location>
    </subcellularLocation>
</comment>
<comment type="similarity">
    <text evidence="2">Belongs to the snail C2H2-type zinc-finger protein family.</text>
</comment>
<keyword id="KW-0238">DNA-binding</keyword>
<keyword id="KW-0479">Metal-binding</keyword>
<keyword id="KW-0539">Nucleus</keyword>
<keyword id="KW-0677">Repeat</keyword>
<keyword id="KW-0862">Zinc</keyword>
<keyword id="KW-0863">Zinc-finger</keyword>
<feature type="chain" id="PRO_0000047045" description="Escargot/snail protein homolog">
    <location>
        <begin position="1" status="less than"/>
        <end position="46" status="greater than"/>
    </location>
</feature>
<feature type="zinc finger region" description="C2H2-type 1" evidence="1">
    <location>
        <begin position="1" status="less than"/>
        <end position="4"/>
    </location>
</feature>
<feature type="zinc finger region" description="C2H2-type 2" evidence="1">
    <location>
        <begin position="8"/>
        <end position="30"/>
    </location>
</feature>
<feature type="zinc finger region" description="C2H2-type 3" evidence="1">
    <location>
        <begin position="36"/>
        <end position="46" status="greater than"/>
    </location>
</feature>
<feature type="non-terminal residue">
    <location>
        <position position="1"/>
    </location>
</feature>
<feature type="non-terminal residue">
    <location>
        <position position="46"/>
    </location>
</feature>
<evidence type="ECO:0000255" key="1">
    <source>
        <dbReference type="PROSITE-ProRule" id="PRU00042"/>
    </source>
</evidence>
<evidence type="ECO:0000305" key="2"/>
<organism>
    <name type="scientific">Pholcus phalangioides</name>
    <name type="common">Longbodied cellar spider</name>
    <name type="synonym">Aranea phalangioides</name>
    <dbReference type="NCBI Taxonomy" id="6932"/>
    <lineage>
        <taxon>Eukaryota</taxon>
        <taxon>Metazoa</taxon>
        <taxon>Ecdysozoa</taxon>
        <taxon>Arthropoda</taxon>
        <taxon>Chelicerata</taxon>
        <taxon>Arachnida</taxon>
        <taxon>Araneae</taxon>
        <taxon>Araneomorphae</taxon>
        <taxon>Haplogynae</taxon>
        <taxon>Pholcoidea</taxon>
        <taxon>Pholcidae</taxon>
        <taxon>Pholcus</taxon>
    </lineage>
</organism>
<accession>Q02026</accession>
<name>ESCA_PHOPA</name>
<reference key="1">
    <citation type="journal article" date="1992" name="Proc. Natl. Acad. Sci. U.S.A.">
        <title>Evolutionary conservation pattern of zinc-finger domains of Drosophila segmentation genes.</title>
        <authorList>
            <person name="Sommer R.J."/>
            <person name="Retzlaff M."/>
            <person name="Goerlich K."/>
            <person name="Sander K."/>
            <person name="Tautz D."/>
        </authorList>
    </citation>
    <scope>NUCLEOTIDE SEQUENCE [GENOMIC DNA]</scope>
</reference>
<dbReference type="EMBL" id="L01606">
    <property type="protein sequence ID" value="AAA89212.1"/>
    <property type="molecule type" value="Genomic_DNA"/>
</dbReference>
<dbReference type="SMR" id="Q02026"/>
<dbReference type="GO" id="GO:0005634">
    <property type="term" value="C:nucleus"/>
    <property type="evidence" value="ECO:0007669"/>
    <property type="project" value="UniProtKB-SubCell"/>
</dbReference>
<dbReference type="GO" id="GO:0000981">
    <property type="term" value="F:DNA-binding transcription factor activity, RNA polymerase II-specific"/>
    <property type="evidence" value="ECO:0007669"/>
    <property type="project" value="TreeGrafter"/>
</dbReference>
<dbReference type="GO" id="GO:0000978">
    <property type="term" value="F:RNA polymerase II cis-regulatory region sequence-specific DNA binding"/>
    <property type="evidence" value="ECO:0007669"/>
    <property type="project" value="TreeGrafter"/>
</dbReference>
<dbReference type="GO" id="GO:0008270">
    <property type="term" value="F:zinc ion binding"/>
    <property type="evidence" value="ECO:0007669"/>
    <property type="project" value="UniProtKB-KW"/>
</dbReference>
<dbReference type="FunFam" id="3.30.160.60:FF:000942">
    <property type="entry name" value="Snail zinc finger protein"/>
    <property type="match status" value="1"/>
</dbReference>
<dbReference type="Gene3D" id="3.30.160.60">
    <property type="entry name" value="Classic Zinc Finger"/>
    <property type="match status" value="2"/>
</dbReference>
<dbReference type="InterPro" id="IPR050527">
    <property type="entry name" value="Snail/Krueppel_Znf"/>
</dbReference>
<dbReference type="InterPro" id="IPR036236">
    <property type="entry name" value="Znf_C2H2_sf"/>
</dbReference>
<dbReference type="InterPro" id="IPR013087">
    <property type="entry name" value="Znf_C2H2_type"/>
</dbReference>
<dbReference type="PANTHER" id="PTHR24388:SF54">
    <property type="entry name" value="PROTEIN ESCARGOT"/>
    <property type="match status" value="1"/>
</dbReference>
<dbReference type="PANTHER" id="PTHR24388">
    <property type="entry name" value="ZINC FINGER PROTEIN"/>
    <property type="match status" value="1"/>
</dbReference>
<dbReference type="Pfam" id="PF00096">
    <property type="entry name" value="zf-C2H2"/>
    <property type="match status" value="1"/>
</dbReference>
<dbReference type="SUPFAM" id="SSF57667">
    <property type="entry name" value="beta-beta-alpha zinc fingers"/>
    <property type="match status" value="1"/>
</dbReference>
<dbReference type="PROSITE" id="PS00028">
    <property type="entry name" value="ZINC_FINGER_C2H2_1"/>
    <property type="match status" value="1"/>
</dbReference>
<dbReference type="PROSITE" id="PS50157">
    <property type="entry name" value="ZINC_FINGER_C2H2_2"/>
    <property type="match status" value="1"/>
</dbReference>
<sequence>IATHTLPCRCKLCGKAFSRPWLLNGHIRTHTGEKPFSCQHCSRAFA</sequence>